<feature type="initiator methionine" description="Removed" evidence="1">
    <location>
        <position position="1"/>
    </location>
</feature>
<feature type="chain" id="PRO_0000327632" description="Actin-related protein 2/3 complex subunit 5">
    <location>
        <begin position="2"/>
        <end position="138"/>
    </location>
</feature>
<feature type="region of interest" description="Disordered" evidence="2">
    <location>
        <begin position="1"/>
        <end position="21"/>
    </location>
</feature>
<name>ARPC5_DICDI</name>
<organism>
    <name type="scientific">Dictyostelium discoideum</name>
    <name type="common">Social amoeba</name>
    <dbReference type="NCBI Taxonomy" id="44689"/>
    <lineage>
        <taxon>Eukaryota</taxon>
        <taxon>Amoebozoa</taxon>
        <taxon>Evosea</taxon>
        <taxon>Eumycetozoa</taxon>
        <taxon>Dictyostelia</taxon>
        <taxon>Dictyosteliales</taxon>
        <taxon>Dictyosteliaceae</taxon>
        <taxon>Dictyostelium</taxon>
    </lineage>
</organism>
<comment type="function">
    <text evidence="4">Functions as a component of the Arp2/3 complex which is involved in regulation of actin polymerization and together with an activating nucleation-promoting factor (NPF) mediates the formation of branched actin networks. Seems to contact the pointed end of the daughter actin filament. The Arp2/3 complex is involved in organizing the actin system in cell motility and chemotaxis, in phagocytosis and macropinocytosis, at late steps of endosome processing, and in mitosis. In concert with a group of other proteins, the Arp2/3 complex plays a general role in the rapid activation and adaptation of the actin system to its multiple functions.</text>
</comment>
<comment type="subunit">
    <text evidence="3 5">Component of the Arp2/3 complex composed of arpB/Arp2, arpC/Arp3, arcA/p41-arc, arcB/p34-arc, arcC/p21-arc, arcD/p20-arc and arcE/p16-arc. Interacts with carmil (via the region between the LRR domain and COOH-terminal proline-rich domain); carmil is required for Arp2/3-dependent actin nucleation. Arp2/3 complex, MyoB, MyoC, and the alpha and beta subunits of capping protein all form a larger complex with carmil.</text>
</comment>
<comment type="subcellular location">
    <subcellularLocation>
        <location>Cytoplasm</location>
        <location>Cytoskeleton</location>
    </subcellularLocation>
    <subcellularLocation>
        <location>Cytoplasm</location>
        <location>Cytosol</location>
    </subcellularLocation>
    <subcellularLocation>
        <location>Cytoplasm</location>
        <location>Cell cortex</location>
    </subcellularLocation>
    <subcellularLocation>
        <location>Cell projection</location>
        <location>Pseudopodium</location>
    </subcellularLocation>
</comment>
<comment type="similarity">
    <text evidence="6">Belongs to the ARPC5 family.</text>
</comment>
<protein>
    <recommendedName>
        <fullName>Actin-related protein 2/3 complex subunit 5</fullName>
    </recommendedName>
    <alternativeName>
        <fullName>Arp2/3 complex 16 kDa subunit</fullName>
        <shortName>p16-ARC</shortName>
    </alternativeName>
</protein>
<reference key="1">
    <citation type="journal article" date="2001" name="Cell Motil. Cytoskeleton">
        <title>Dynamics of the Dictyostelium Arp2/3 complex in endocytosis, cytokinesis, and chemotaxis.</title>
        <authorList>
            <person name="Insall R."/>
            <person name="Mueller-Taubenberger A."/>
            <person name="Machesky L."/>
            <person name="Koehler J."/>
            <person name="Simmeth E."/>
            <person name="Atkinson S.J."/>
            <person name="Weber I."/>
            <person name="Gerisch G."/>
        </authorList>
    </citation>
    <scope>NUCLEOTIDE SEQUENCE [MRNA]</scope>
    <scope>FUNCTION</scope>
    <scope>SUBCELLULAR LOCATION</scope>
    <source>
        <strain>AX2</strain>
    </source>
</reference>
<reference key="2">
    <citation type="journal article" date="2005" name="Nature">
        <title>The genome of the social amoeba Dictyostelium discoideum.</title>
        <authorList>
            <person name="Eichinger L."/>
            <person name="Pachebat J.A."/>
            <person name="Gloeckner G."/>
            <person name="Rajandream M.A."/>
            <person name="Sucgang R."/>
            <person name="Berriman M."/>
            <person name="Song J."/>
            <person name="Olsen R."/>
            <person name="Szafranski K."/>
            <person name="Xu Q."/>
            <person name="Tunggal B."/>
            <person name="Kummerfeld S."/>
            <person name="Madera M."/>
            <person name="Konfortov B.A."/>
            <person name="Rivero F."/>
            <person name="Bankier A.T."/>
            <person name="Lehmann R."/>
            <person name="Hamlin N."/>
            <person name="Davies R."/>
            <person name="Gaudet P."/>
            <person name="Fey P."/>
            <person name="Pilcher K."/>
            <person name="Chen G."/>
            <person name="Saunders D."/>
            <person name="Sodergren E.J."/>
            <person name="Davis P."/>
            <person name="Kerhornou A."/>
            <person name="Nie X."/>
            <person name="Hall N."/>
            <person name="Anjard C."/>
            <person name="Hemphill L."/>
            <person name="Bason N."/>
            <person name="Farbrother P."/>
            <person name="Desany B."/>
            <person name="Just E."/>
            <person name="Morio T."/>
            <person name="Rost R."/>
            <person name="Churcher C.M."/>
            <person name="Cooper J."/>
            <person name="Haydock S."/>
            <person name="van Driessche N."/>
            <person name="Cronin A."/>
            <person name="Goodhead I."/>
            <person name="Muzny D.M."/>
            <person name="Mourier T."/>
            <person name="Pain A."/>
            <person name="Lu M."/>
            <person name="Harper D."/>
            <person name="Lindsay R."/>
            <person name="Hauser H."/>
            <person name="James K.D."/>
            <person name="Quiles M."/>
            <person name="Madan Babu M."/>
            <person name="Saito T."/>
            <person name="Buchrieser C."/>
            <person name="Wardroper A."/>
            <person name="Felder M."/>
            <person name="Thangavelu M."/>
            <person name="Johnson D."/>
            <person name="Knights A."/>
            <person name="Loulseged H."/>
            <person name="Mungall K.L."/>
            <person name="Oliver K."/>
            <person name="Price C."/>
            <person name="Quail M.A."/>
            <person name="Urushihara H."/>
            <person name="Hernandez J."/>
            <person name="Rabbinowitsch E."/>
            <person name="Steffen D."/>
            <person name="Sanders M."/>
            <person name="Ma J."/>
            <person name="Kohara Y."/>
            <person name="Sharp S."/>
            <person name="Simmonds M.N."/>
            <person name="Spiegler S."/>
            <person name="Tivey A."/>
            <person name="Sugano S."/>
            <person name="White B."/>
            <person name="Walker D."/>
            <person name="Woodward J.R."/>
            <person name="Winckler T."/>
            <person name="Tanaka Y."/>
            <person name="Shaulsky G."/>
            <person name="Schleicher M."/>
            <person name="Weinstock G.M."/>
            <person name="Rosenthal A."/>
            <person name="Cox E.C."/>
            <person name="Chisholm R.L."/>
            <person name="Gibbs R.A."/>
            <person name="Loomis W.F."/>
            <person name="Platzer M."/>
            <person name="Kay R.R."/>
            <person name="Williams J.G."/>
            <person name="Dear P.H."/>
            <person name="Noegel A.A."/>
            <person name="Barrell B.G."/>
            <person name="Kuspa A."/>
        </authorList>
    </citation>
    <scope>NUCLEOTIDE SEQUENCE [LARGE SCALE GENOMIC DNA]</scope>
    <source>
        <strain>AX4</strain>
    </source>
</reference>
<reference key="3">
    <citation type="journal article" date="2001" name="J. Cell Biol.">
        <title>The Dictyostelium CARMIL protein links capping protein and the Arp2/3 complex to type I myosins through their SH3 domains.</title>
        <authorList>
            <person name="Jung G."/>
            <person name="Remmert K."/>
            <person name="Wu X."/>
            <person name="Volosky J.M."/>
            <person name="Hammer J.A. III"/>
        </authorList>
    </citation>
    <scope>PROTEIN SEQUENCE OF 34-56</scope>
    <scope>SUBCELLULAR LOCATION</scope>
    <scope>SUBUNIT</scope>
</reference>
<reference key="4">
    <citation type="journal article" date="2007" name="Protein Expr. Purif.">
        <title>Vectors for expression of proteins with single or combinatorial fluorescent protein and tandem affinity purification tags in Dictyostelium.</title>
        <authorList>
            <person name="Meima M.E."/>
            <person name="Weening K.E."/>
            <person name="Schaap P."/>
        </authorList>
    </citation>
    <scope>IDENTIFICATION IN THE ARP2/3 COMPLEX</scope>
    <scope>IDENTIFICATION BY MASS SPECTROMETRY</scope>
</reference>
<sequence>MNYEDDNVESGQAGKSDAEYKADIANREKEVTKALNAGKPQDALNVALADPPIYTKTGAIKDQNATIVLNLLGSFKDKDVETSVETLNDDQLDILMKYVYRGLATGENSPIFFKWHECVLKKGGAGTIIRVISEKKTV</sequence>
<evidence type="ECO:0000250" key="1"/>
<evidence type="ECO:0000256" key="2">
    <source>
        <dbReference type="SAM" id="MobiDB-lite"/>
    </source>
</evidence>
<evidence type="ECO:0000269" key="3">
    <source>
    </source>
</evidence>
<evidence type="ECO:0000269" key="4">
    <source>
    </source>
</evidence>
<evidence type="ECO:0000269" key="5">
    <source>
    </source>
</evidence>
<evidence type="ECO:0000305" key="6"/>
<accession>O96626</accession>
<accession>Q54J29</accession>
<proteinExistence type="evidence at protein level"/>
<dbReference type="EMBL" id="AF095934">
    <property type="protein sequence ID" value="AAC99781.1"/>
    <property type="molecule type" value="mRNA"/>
</dbReference>
<dbReference type="EMBL" id="AAFI02000111">
    <property type="protein sequence ID" value="EAL63256.1"/>
    <property type="molecule type" value="Genomic_DNA"/>
</dbReference>
<dbReference type="RefSeq" id="XP_636772.1">
    <property type="nucleotide sequence ID" value="XM_631680.1"/>
</dbReference>
<dbReference type="SMR" id="O96626"/>
<dbReference type="FunCoup" id="O96626">
    <property type="interactions" value="451"/>
</dbReference>
<dbReference type="STRING" id="44689.O96626"/>
<dbReference type="PaxDb" id="44689-DDB0191138"/>
<dbReference type="EnsemblProtists" id="EAL63256">
    <property type="protein sequence ID" value="EAL63256"/>
    <property type="gene ID" value="DDB_G0288319"/>
</dbReference>
<dbReference type="GeneID" id="8626575"/>
<dbReference type="KEGG" id="ddi:DDB_G0288319"/>
<dbReference type="dictyBase" id="DDB_G0288319">
    <property type="gene designation" value="arcE"/>
</dbReference>
<dbReference type="VEuPathDB" id="AmoebaDB:DDB_G0288319"/>
<dbReference type="eggNOG" id="KOG3380">
    <property type="taxonomic scope" value="Eukaryota"/>
</dbReference>
<dbReference type="HOGENOM" id="CLU_101888_2_0_1"/>
<dbReference type="InParanoid" id="O96626"/>
<dbReference type="OMA" id="GMGCIMR"/>
<dbReference type="PhylomeDB" id="O96626"/>
<dbReference type="Reactome" id="R-DDI-2029482">
    <property type="pathway name" value="Regulation of actin dynamics for phagocytic cup formation"/>
</dbReference>
<dbReference type="Reactome" id="R-DDI-5663213">
    <property type="pathway name" value="RHO GTPases Activate WASPs and WAVEs"/>
</dbReference>
<dbReference type="Reactome" id="R-DDI-6798695">
    <property type="pathway name" value="Neutrophil degranulation"/>
</dbReference>
<dbReference type="PRO" id="PR:O96626"/>
<dbReference type="Proteomes" id="UP000002195">
    <property type="component" value="Chromosome 5"/>
</dbReference>
<dbReference type="GO" id="GO:0005885">
    <property type="term" value="C:Arp2/3 protein complex"/>
    <property type="evidence" value="ECO:0000314"/>
    <property type="project" value="dictyBase"/>
</dbReference>
<dbReference type="GO" id="GO:0005938">
    <property type="term" value="C:cell cortex"/>
    <property type="evidence" value="ECO:0007669"/>
    <property type="project" value="UniProtKB-SubCell"/>
</dbReference>
<dbReference type="GO" id="GO:0005737">
    <property type="term" value="C:cytoplasm"/>
    <property type="evidence" value="ECO:0000318"/>
    <property type="project" value="GO_Central"/>
</dbReference>
<dbReference type="GO" id="GO:0005829">
    <property type="term" value="C:cytosol"/>
    <property type="evidence" value="ECO:0007669"/>
    <property type="project" value="UniProtKB-SubCell"/>
</dbReference>
<dbReference type="GO" id="GO:0031143">
    <property type="term" value="C:pseudopodium"/>
    <property type="evidence" value="ECO:0007669"/>
    <property type="project" value="UniProtKB-SubCell"/>
</dbReference>
<dbReference type="GO" id="GO:0051015">
    <property type="term" value="F:actin filament binding"/>
    <property type="evidence" value="ECO:0000318"/>
    <property type="project" value="GO_Central"/>
</dbReference>
<dbReference type="GO" id="GO:0030041">
    <property type="term" value="P:actin filament polymerization"/>
    <property type="evidence" value="ECO:0000304"/>
    <property type="project" value="dictyBase"/>
</dbReference>
<dbReference type="GO" id="GO:0045010">
    <property type="term" value="P:actin nucleation"/>
    <property type="evidence" value="ECO:0000304"/>
    <property type="project" value="dictyBase"/>
</dbReference>
<dbReference type="GO" id="GO:0034314">
    <property type="term" value="P:Arp2/3 complex-mediated actin nucleation"/>
    <property type="evidence" value="ECO:0000318"/>
    <property type="project" value="GO_Central"/>
</dbReference>
<dbReference type="GO" id="GO:0006887">
    <property type="term" value="P:exocytosis"/>
    <property type="evidence" value="ECO:0000270"/>
    <property type="project" value="dictyBase"/>
</dbReference>
<dbReference type="GO" id="GO:0006909">
    <property type="term" value="P:phagocytosis"/>
    <property type="evidence" value="ECO:0000270"/>
    <property type="project" value="dictyBase"/>
</dbReference>
<dbReference type="GO" id="GO:0030833">
    <property type="term" value="P:regulation of actin filament polymerization"/>
    <property type="evidence" value="ECO:0007669"/>
    <property type="project" value="InterPro"/>
</dbReference>
<dbReference type="Gene3D" id="1.25.40.190">
    <property type="entry name" value="Actin-related protein 2/3 complex subunit 5"/>
    <property type="match status" value="1"/>
</dbReference>
<dbReference type="InterPro" id="IPR006789">
    <property type="entry name" value="ARPC5"/>
</dbReference>
<dbReference type="InterPro" id="IPR036743">
    <property type="entry name" value="ARPC5_sf"/>
</dbReference>
<dbReference type="PANTHER" id="PTHR12644">
    <property type="entry name" value="ARP2/3 COMPLEX 16 KD SUBUNIT P16-ARC"/>
    <property type="match status" value="1"/>
</dbReference>
<dbReference type="Pfam" id="PF04699">
    <property type="entry name" value="P16-Arc"/>
    <property type="match status" value="1"/>
</dbReference>
<dbReference type="PIRSF" id="PIRSF039096">
    <property type="entry name" value="p16-ARC"/>
    <property type="match status" value="1"/>
</dbReference>
<dbReference type="SUPFAM" id="SSF69103">
    <property type="entry name" value="Arp2/3 complex 16 kDa subunit ARPC5"/>
    <property type="match status" value="1"/>
</dbReference>
<gene>
    <name type="primary">arcE</name>
    <name type="synonym">Arc15</name>
    <name type="synonym">arpH</name>
    <name type="ORF">DDB_G0288319</name>
</gene>
<keyword id="KW-0009">Actin-binding</keyword>
<keyword id="KW-0966">Cell projection</keyword>
<keyword id="KW-0963">Cytoplasm</keyword>
<keyword id="KW-0206">Cytoskeleton</keyword>
<keyword id="KW-0903">Direct protein sequencing</keyword>
<keyword id="KW-1185">Reference proteome</keyword>